<keyword id="KW-0963">Cytoplasm</keyword>
<keyword id="KW-0369">Histidine metabolism</keyword>
<keyword id="KW-0378">Hydrolase</keyword>
<keyword id="KW-0408">Iron</keyword>
<keyword id="KW-0479">Metal-binding</keyword>
<keyword id="KW-0862">Zinc</keyword>
<reference key="1">
    <citation type="journal article" date="2006" name="J. Bacteriol.">
        <title>Complete genome sequence of Yersinia pestis strains Antiqua and Nepal516: evidence of gene reduction in an emerging pathogen.</title>
        <authorList>
            <person name="Chain P.S.G."/>
            <person name="Hu P."/>
            <person name="Malfatti S.A."/>
            <person name="Radnedge L."/>
            <person name="Larimer F."/>
            <person name="Vergez L.M."/>
            <person name="Worsham P."/>
            <person name="Chu M.C."/>
            <person name="Andersen G.L."/>
        </authorList>
    </citation>
    <scope>NUCLEOTIDE SEQUENCE [LARGE SCALE GENOMIC DNA]</scope>
    <source>
        <strain>Antiqua</strain>
    </source>
</reference>
<feature type="chain" id="PRO_0000306541" description="Imidazolonepropionase">
    <location>
        <begin position="1"/>
        <end position="406"/>
    </location>
</feature>
<feature type="binding site" evidence="1">
    <location>
        <position position="72"/>
    </location>
    <ligand>
        <name>Fe(3+)</name>
        <dbReference type="ChEBI" id="CHEBI:29034"/>
    </ligand>
</feature>
<feature type="binding site" evidence="1">
    <location>
        <position position="72"/>
    </location>
    <ligand>
        <name>Zn(2+)</name>
        <dbReference type="ChEBI" id="CHEBI:29105"/>
    </ligand>
</feature>
<feature type="binding site" evidence="1">
    <location>
        <position position="74"/>
    </location>
    <ligand>
        <name>Fe(3+)</name>
        <dbReference type="ChEBI" id="CHEBI:29034"/>
    </ligand>
</feature>
<feature type="binding site" evidence="1">
    <location>
        <position position="74"/>
    </location>
    <ligand>
        <name>Zn(2+)</name>
        <dbReference type="ChEBI" id="CHEBI:29105"/>
    </ligand>
</feature>
<feature type="binding site" evidence="1">
    <location>
        <position position="81"/>
    </location>
    <ligand>
        <name>4-imidazolone-5-propanoate</name>
        <dbReference type="ChEBI" id="CHEBI:77893"/>
    </ligand>
</feature>
<feature type="binding site" evidence="1">
    <location>
        <position position="144"/>
    </location>
    <ligand>
        <name>4-imidazolone-5-propanoate</name>
        <dbReference type="ChEBI" id="CHEBI:77893"/>
    </ligand>
</feature>
<feature type="binding site" evidence="1">
    <location>
        <position position="144"/>
    </location>
    <ligand>
        <name>N-formimidoyl-L-glutamate</name>
        <dbReference type="ChEBI" id="CHEBI:58928"/>
    </ligand>
</feature>
<feature type="binding site" evidence="1">
    <location>
        <position position="177"/>
    </location>
    <ligand>
        <name>4-imidazolone-5-propanoate</name>
        <dbReference type="ChEBI" id="CHEBI:77893"/>
    </ligand>
</feature>
<feature type="binding site" evidence="1">
    <location>
        <position position="242"/>
    </location>
    <ligand>
        <name>Fe(3+)</name>
        <dbReference type="ChEBI" id="CHEBI:29034"/>
    </ligand>
</feature>
<feature type="binding site" evidence="1">
    <location>
        <position position="242"/>
    </location>
    <ligand>
        <name>Zn(2+)</name>
        <dbReference type="ChEBI" id="CHEBI:29105"/>
    </ligand>
</feature>
<feature type="binding site" evidence="1">
    <location>
        <position position="245"/>
    </location>
    <ligand>
        <name>4-imidazolone-5-propanoate</name>
        <dbReference type="ChEBI" id="CHEBI:77893"/>
    </ligand>
</feature>
<feature type="binding site" evidence="1">
    <location>
        <position position="317"/>
    </location>
    <ligand>
        <name>Fe(3+)</name>
        <dbReference type="ChEBI" id="CHEBI:29034"/>
    </ligand>
</feature>
<feature type="binding site" evidence="1">
    <location>
        <position position="317"/>
    </location>
    <ligand>
        <name>Zn(2+)</name>
        <dbReference type="ChEBI" id="CHEBI:29105"/>
    </ligand>
</feature>
<feature type="binding site" evidence="1">
    <location>
        <position position="319"/>
    </location>
    <ligand>
        <name>N-formimidoyl-L-glutamate</name>
        <dbReference type="ChEBI" id="CHEBI:58928"/>
    </ligand>
</feature>
<feature type="binding site" evidence="1">
    <location>
        <position position="321"/>
    </location>
    <ligand>
        <name>N-formimidoyl-L-glutamate</name>
        <dbReference type="ChEBI" id="CHEBI:58928"/>
    </ligand>
</feature>
<feature type="binding site" evidence="1">
    <location>
        <position position="322"/>
    </location>
    <ligand>
        <name>4-imidazolone-5-propanoate</name>
        <dbReference type="ChEBI" id="CHEBI:77893"/>
    </ligand>
</feature>
<gene>
    <name evidence="1" type="primary">hutI</name>
    <name type="ordered locus">YPA_1354</name>
</gene>
<name>HUTI_YERPA</name>
<organism>
    <name type="scientific">Yersinia pestis bv. Antiqua (strain Antiqua)</name>
    <dbReference type="NCBI Taxonomy" id="360102"/>
    <lineage>
        <taxon>Bacteria</taxon>
        <taxon>Pseudomonadati</taxon>
        <taxon>Pseudomonadota</taxon>
        <taxon>Gammaproteobacteria</taxon>
        <taxon>Enterobacterales</taxon>
        <taxon>Yersiniaceae</taxon>
        <taxon>Yersinia</taxon>
    </lineage>
</organism>
<protein>
    <recommendedName>
        <fullName evidence="1">Imidazolonepropionase</fullName>
        <ecNumber evidence="1">3.5.2.7</ecNumber>
    </recommendedName>
    <alternativeName>
        <fullName evidence="1">Imidazolone-5-propionate hydrolase</fullName>
    </alternativeName>
</protein>
<proteinExistence type="inferred from homology"/>
<evidence type="ECO:0000255" key="1">
    <source>
        <dbReference type="HAMAP-Rule" id="MF_00372"/>
    </source>
</evidence>
<sequence length="406" mass="43821">MVSVTHCDSLWFGADIITMRGGNYQLIPQGAIAVTGDKIVWIGPHAELPPIHAARQVVYEGGLITPGLIDCHTHLVFGDDRSNEFEQRLNGVSYAEIAANGGGIISTVRATRQASEQQLLEQALFRLKPLLAEGVTTIEIKSGYGLNLESEIKMLRVARRLGELLPIDVKTTCLAAHALPPEFIGQPDDYIDVVCNSIIPQVAVENLADAVDAFCEHLAFSPAQVERVFLAAQKAGLPVKLHAEQLSALRGATLAAKFHAISADHLEYATESDVQAMANAGTVAVLLPGAYYLLRETQCPPIDLFRQYKVPMALASDANPGTSPVLSLRLMLNMACTLFRMTPEEALAGVTCHAAQALGVQQTQGTLETGKLANWVHWPLSHPAELAYWLGGQLPATVVFRGEVRP</sequence>
<comment type="function">
    <text evidence="1">Catalyzes the hydrolytic cleavage of the carbon-nitrogen bond in imidazolone-5-propanoate to yield N-formimidoyl-L-glutamate. It is the third step in the universal histidine degradation pathway.</text>
</comment>
<comment type="catalytic activity">
    <reaction evidence="1">
        <text>4-imidazolone-5-propanoate + H2O = N-formimidoyl-L-glutamate</text>
        <dbReference type="Rhea" id="RHEA:23660"/>
        <dbReference type="ChEBI" id="CHEBI:15377"/>
        <dbReference type="ChEBI" id="CHEBI:58928"/>
        <dbReference type="ChEBI" id="CHEBI:77893"/>
        <dbReference type="EC" id="3.5.2.7"/>
    </reaction>
</comment>
<comment type="cofactor">
    <cofactor evidence="1">
        <name>Zn(2+)</name>
        <dbReference type="ChEBI" id="CHEBI:29105"/>
    </cofactor>
    <cofactor evidence="1">
        <name>Fe(3+)</name>
        <dbReference type="ChEBI" id="CHEBI:29034"/>
    </cofactor>
    <text evidence="1">Binds 1 zinc or iron ion per subunit.</text>
</comment>
<comment type="pathway">
    <text evidence="1">Amino-acid degradation; L-histidine degradation into L-glutamate; N-formimidoyl-L-glutamate from L-histidine: step 3/3.</text>
</comment>
<comment type="subcellular location">
    <subcellularLocation>
        <location evidence="1">Cytoplasm</location>
    </subcellularLocation>
</comment>
<comment type="similarity">
    <text evidence="1">Belongs to the metallo-dependent hydrolases superfamily. HutI family.</text>
</comment>
<accession>Q1C8A1</accession>
<dbReference type="EC" id="3.5.2.7" evidence="1"/>
<dbReference type="EMBL" id="CP000308">
    <property type="protein sequence ID" value="ABG13321.1"/>
    <property type="molecule type" value="Genomic_DNA"/>
</dbReference>
<dbReference type="RefSeq" id="WP_002211281.1">
    <property type="nucleotide sequence ID" value="NZ_CP009906.1"/>
</dbReference>
<dbReference type="SMR" id="Q1C8A1"/>
<dbReference type="GeneID" id="57976686"/>
<dbReference type="KEGG" id="ypa:YPA_1354"/>
<dbReference type="UniPathway" id="UPA00379">
    <property type="reaction ID" value="UER00551"/>
</dbReference>
<dbReference type="Proteomes" id="UP000001971">
    <property type="component" value="Chromosome"/>
</dbReference>
<dbReference type="GO" id="GO:0005737">
    <property type="term" value="C:cytoplasm"/>
    <property type="evidence" value="ECO:0007669"/>
    <property type="project" value="UniProtKB-SubCell"/>
</dbReference>
<dbReference type="GO" id="GO:0050480">
    <property type="term" value="F:imidazolonepropionase activity"/>
    <property type="evidence" value="ECO:0007669"/>
    <property type="project" value="UniProtKB-UniRule"/>
</dbReference>
<dbReference type="GO" id="GO:0005506">
    <property type="term" value="F:iron ion binding"/>
    <property type="evidence" value="ECO:0007669"/>
    <property type="project" value="UniProtKB-UniRule"/>
</dbReference>
<dbReference type="GO" id="GO:0008270">
    <property type="term" value="F:zinc ion binding"/>
    <property type="evidence" value="ECO:0007669"/>
    <property type="project" value="UniProtKB-UniRule"/>
</dbReference>
<dbReference type="GO" id="GO:0019556">
    <property type="term" value="P:L-histidine catabolic process to glutamate and formamide"/>
    <property type="evidence" value="ECO:0007669"/>
    <property type="project" value="UniProtKB-UniPathway"/>
</dbReference>
<dbReference type="GO" id="GO:0019557">
    <property type="term" value="P:L-histidine catabolic process to glutamate and formate"/>
    <property type="evidence" value="ECO:0007669"/>
    <property type="project" value="UniProtKB-UniPathway"/>
</dbReference>
<dbReference type="CDD" id="cd01296">
    <property type="entry name" value="Imidazolone-5PH"/>
    <property type="match status" value="1"/>
</dbReference>
<dbReference type="FunFam" id="3.20.20.140:FF:000007">
    <property type="entry name" value="Imidazolonepropionase"/>
    <property type="match status" value="1"/>
</dbReference>
<dbReference type="Gene3D" id="3.20.20.140">
    <property type="entry name" value="Metal-dependent hydrolases"/>
    <property type="match status" value="1"/>
</dbReference>
<dbReference type="Gene3D" id="2.30.40.10">
    <property type="entry name" value="Urease, subunit C, domain 1"/>
    <property type="match status" value="1"/>
</dbReference>
<dbReference type="HAMAP" id="MF_00372">
    <property type="entry name" value="HutI"/>
    <property type="match status" value="1"/>
</dbReference>
<dbReference type="InterPro" id="IPR006680">
    <property type="entry name" value="Amidohydro-rel"/>
</dbReference>
<dbReference type="InterPro" id="IPR005920">
    <property type="entry name" value="HutI"/>
</dbReference>
<dbReference type="InterPro" id="IPR011059">
    <property type="entry name" value="Metal-dep_hydrolase_composite"/>
</dbReference>
<dbReference type="InterPro" id="IPR032466">
    <property type="entry name" value="Metal_Hydrolase"/>
</dbReference>
<dbReference type="NCBIfam" id="TIGR01224">
    <property type="entry name" value="hutI"/>
    <property type="match status" value="1"/>
</dbReference>
<dbReference type="PANTHER" id="PTHR42752">
    <property type="entry name" value="IMIDAZOLONEPROPIONASE"/>
    <property type="match status" value="1"/>
</dbReference>
<dbReference type="PANTHER" id="PTHR42752:SF1">
    <property type="entry name" value="IMIDAZOLONEPROPIONASE-RELATED"/>
    <property type="match status" value="1"/>
</dbReference>
<dbReference type="Pfam" id="PF01979">
    <property type="entry name" value="Amidohydro_1"/>
    <property type="match status" value="1"/>
</dbReference>
<dbReference type="SUPFAM" id="SSF51338">
    <property type="entry name" value="Composite domain of metallo-dependent hydrolases"/>
    <property type="match status" value="1"/>
</dbReference>
<dbReference type="SUPFAM" id="SSF51556">
    <property type="entry name" value="Metallo-dependent hydrolases"/>
    <property type="match status" value="1"/>
</dbReference>